<reference key="1">
    <citation type="submission" date="2008-06" db="EMBL/GenBank/DDBJ databases">
        <title>Complete sequence of Stenotrophomonas maltophilia R551-3.</title>
        <authorList>
            <consortium name="US DOE Joint Genome Institute"/>
            <person name="Lucas S."/>
            <person name="Copeland A."/>
            <person name="Lapidus A."/>
            <person name="Glavina del Rio T."/>
            <person name="Dalin E."/>
            <person name="Tice H."/>
            <person name="Pitluck S."/>
            <person name="Chain P."/>
            <person name="Malfatti S."/>
            <person name="Shin M."/>
            <person name="Vergez L."/>
            <person name="Lang D."/>
            <person name="Schmutz J."/>
            <person name="Larimer F."/>
            <person name="Land M."/>
            <person name="Hauser L."/>
            <person name="Kyrpides N."/>
            <person name="Mikhailova N."/>
            <person name="Taghavi S."/>
            <person name="Monchy S."/>
            <person name="Newman L."/>
            <person name="Vangronsveld J."/>
            <person name="van der Lelie D."/>
            <person name="Richardson P."/>
        </authorList>
    </citation>
    <scope>NUCLEOTIDE SEQUENCE [LARGE SCALE GENOMIC DNA]</scope>
    <source>
        <strain>R551-3</strain>
    </source>
</reference>
<dbReference type="EMBL" id="CP001111">
    <property type="protein sequence ID" value="ACF53186.1"/>
    <property type="molecule type" value="Genomic_DNA"/>
</dbReference>
<dbReference type="RefSeq" id="WP_006393629.1">
    <property type="nucleotide sequence ID" value="NC_011071.1"/>
</dbReference>
<dbReference type="SMR" id="B4SJP5"/>
<dbReference type="STRING" id="391008.Smal_3487"/>
<dbReference type="KEGG" id="smt:Smal_3487"/>
<dbReference type="eggNOG" id="COG1666">
    <property type="taxonomic scope" value="Bacteria"/>
</dbReference>
<dbReference type="HOGENOM" id="CLU_099839_1_0_6"/>
<dbReference type="OrthoDB" id="9801447at2"/>
<dbReference type="Proteomes" id="UP000001867">
    <property type="component" value="Chromosome"/>
</dbReference>
<dbReference type="GO" id="GO:0005829">
    <property type="term" value="C:cytosol"/>
    <property type="evidence" value="ECO:0007669"/>
    <property type="project" value="TreeGrafter"/>
</dbReference>
<dbReference type="GO" id="GO:0000166">
    <property type="term" value="F:nucleotide binding"/>
    <property type="evidence" value="ECO:0007669"/>
    <property type="project" value="TreeGrafter"/>
</dbReference>
<dbReference type="CDD" id="cd11740">
    <property type="entry name" value="YajQ_like"/>
    <property type="match status" value="1"/>
</dbReference>
<dbReference type="Gene3D" id="3.30.70.860">
    <property type="match status" value="1"/>
</dbReference>
<dbReference type="Gene3D" id="3.30.70.990">
    <property type="entry name" value="YajQ-like, domain 2"/>
    <property type="match status" value="1"/>
</dbReference>
<dbReference type="HAMAP" id="MF_00632">
    <property type="entry name" value="YajQ"/>
    <property type="match status" value="1"/>
</dbReference>
<dbReference type="InterPro" id="IPR007551">
    <property type="entry name" value="DUF520"/>
</dbReference>
<dbReference type="InterPro" id="IPR035571">
    <property type="entry name" value="UPF0234-like_C"/>
</dbReference>
<dbReference type="InterPro" id="IPR035570">
    <property type="entry name" value="UPF0234_N"/>
</dbReference>
<dbReference type="InterPro" id="IPR036183">
    <property type="entry name" value="YajQ-like_sf"/>
</dbReference>
<dbReference type="NCBIfam" id="NF003819">
    <property type="entry name" value="PRK05412.1"/>
    <property type="match status" value="1"/>
</dbReference>
<dbReference type="PANTHER" id="PTHR30476">
    <property type="entry name" value="UPF0234 PROTEIN YAJQ"/>
    <property type="match status" value="1"/>
</dbReference>
<dbReference type="PANTHER" id="PTHR30476:SF0">
    <property type="entry name" value="UPF0234 PROTEIN YAJQ"/>
    <property type="match status" value="1"/>
</dbReference>
<dbReference type="Pfam" id="PF04461">
    <property type="entry name" value="DUF520"/>
    <property type="match status" value="1"/>
</dbReference>
<dbReference type="SUPFAM" id="SSF89963">
    <property type="entry name" value="YajQ-like"/>
    <property type="match status" value="2"/>
</dbReference>
<organism>
    <name type="scientific">Stenotrophomonas maltophilia (strain R551-3)</name>
    <dbReference type="NCBI Taxonomy" id="391008"/>
    <lineage>
        <taxon>Bacteria</taxon>
        <taxon>Pseudomonadati</taxon>
        <taxon>Pseudomonadota</taxon>
        <taxon>Gammaproteobacteria</taxon>
        <taxon>Lysobacterales</taxon>
        <taxon>Lysobacteraceae</taxon>
        <taxon>Stenotrophomonas</taxon>
        <taxon>Stenotrophomonas maltophilia group</taxon>
    </lineage>
</organism>
<name>Y3487_STRM5</name>
<gene>
    <name type="ordered locus">Smal_3487</name>
</gene>
<evidence type="ECO:0000255" key="1">
    <source>
        <dbReference type="HAMAP-Rule" id="MF_00632"/>
    </source>
</evidence>
<protein>
    <recommendedName>
        <fullName evidence="1">Nucleotide-binding protein Smal_3487</fullName>
    </recommendedName>
</protein>
<sequence length="160" mass="17968">MPSFDVVSEVDTHELTNAIDQANRELATRFDFKGVDAKFEREGDVINQTAPTEFQLKQMNDILRARLAARGIDVLSLEFGDIETNLAQARQKITVKQGIEQKIAKKIAAALKDAKLKVESQINGDKLRVQGKKRDDLQDAIAVLKAGKFELPLQFNNFRD</sequence>
<comment type="function">
    <text evidence="1">Nucleotide-binding protein.</text>
</comment>
<comment type="similarity">
    <text evidence="1">Belongs to the YajQ family.</text>
</comment>
<feature type="chain" id="PRO_1000130654" description="Nucleotide-binding protein Smal_3487">
    <location>
        <begin position="1"/>
        <end position="160"/>
    </location>
</feature>
<keyword id="KW-0547">Nucleotide-binding</keyword>
<proteinExistence type="inferred from homology"/>
<accession>B4SJP5</accession>